<protein>
    <recommendedName>
        <fullName evidence="2">DNA/RNA-binding protein Alba 2</fullName>
    </recommendedName>
</protein>
<evidence type="ECO:0000250" key="1">
    <source>
        <dbReference type="UniProtKB" id="P60849"/>
    </source>
</evidence>
<evidence type="ECO:0000255" key="2">
    <source>
        <dbReference type="HAMAP-Rule" id="MF_01122"/>
    </source>
</evidence>
<evidence type="ECO:0000269" key="3">
    <source>
    </source>
</evidence>
<evidence type="ECO:0000269" key="4">
    <source>
    </source>
</evidence>
<evidence type="ECO:0000269" key="5">
    <source>
    </source>
</evidence>
<evidence type="ECO:0000269" key="6">
    <source>
    </source>
</evidence>
<evidence type="ECO:0000269" key="7">
    <source>
    </source>
</evidence>
<evidence type="ECO:0000303" key="8">
    <source>
    </source>
</evidence>
<evidence type="ECO:0000303" key="9">
    <source>
    </source>
</evidence>
<evidence type="ECO:0000305" key="10"/>
<evidence type="ECO:0007744" key="11">
    <source>
        <dbReference type="PDB" id="1UDV"/>
    </source>
</evidence>
<evidence type="ECO:0007744" key="12">
    <source>
        <dbReference type="PDB" id="2A2Y"/>
    </source>
</evidence>
<evidence type="ECO:0007744" key="13">
    <source>
        <dbReference type="PDB" id="2BKY"/>
    </source>
</evidence>
<evidence type="ECO:0007829" key="14">
    <source>
        <dbReference type="PDB" id="1UDV"/>
    </source>
</evidence>
<evidence type="ECO:0007829" key="15">
    <source>
        <dbReference type="PDB" id="2BKY"/>
    </source>
</evidence>
<sequence length="89" mass="10239">MTEKLNEIVVRKTKNVEDHVLDVIVLFNQGIDEVILKGTGREISKAVDVYNSLKDRLGDGVQLVNVQTGSEVRDRRRISYILLRLKRVY</sequence>
<dbReference type="EMBL" id="AE006641">
    <property type="protein sequence ID" value="AAK41238.1"/>
    <property type="molecule type" value="Genomic_DNA"/>
</dbReference>
<dbReference type="PIR" id="G90247">
    <property type="entry name" value="G90247"/>
</dbReference>
<dbReference type="RefSeq" id="WP_009992410.1">
    <property type="nucleotide sequence ID" value="NC_002754.1"/>
</dbReference>
<dbReference type="PDB" id="1UDV">
    <property type="method" value="X-ray"/>
    <property type="resolution" value="1.85 A"/>
    <property type="chains" value="A/B=1-89"/>
</dbReference>
<dbReference type="PDB" id="2A2Y">
    <property type="method" value="NMR"/>
    <property type="chains" value="A/B=1-89"/>
</dbReference>
<dbReference type="PDB" id="2BKY">
    <property type="method" value="X-ray"/>
    <property type="resolution" value="1.70 A"/>
    <property type="chains" value="X/Y=1-89"/>
</dbReference>
<dbReference type="PDBsum" id="1UDV"/>
<dbReference type="PDBsum" id="2A2Y"/>
<dbReference type="PDBsum" id="2BKY"/>
<dbReference type="BMRB" id="Q97ZF4"/>
<dbReference type="SMR" id="Q97ZF4"/>
<dbReference type="DIP" id="DIP-48445N"/>
<dbReference type="FunCoup" id="Q97ZF4">
    <property type="interactions" value="1"/>
</dbReference>
<dbReference type="IntAct" id="Q97ZF4">
    <property type="interactions" value="1"/>
</dbReference>
<dbReference type="STRING" id="273057.SSO6877"/>
<dbReference type="PaxDb" id="273057-SSO6877"/>
<dbReference type="EnsemblBacteria" id="AAK41238">
    <property type="protein sequence ID" value="AAK41238"/>
    <property type="gene ID" value="SSO6877"/>
</dbReference>
<dbReference type="GeneID" id="44129895"/>
<dbReference type="KEGG" id="sso:SSO6877"/>
<dbReference type="PATRIC" id="fig|273057.12.peg.962"/>
<dbReference type="eggNOG" id="arCOG01753">
    <property type="taxonomic scope" value="Archaea"/>
</dbReference>
<dbReference type="HOGENOM" id="CLU_110989_2_0_2"/>
<dbReference type="InParanoid" id="Q97ZF4"/>
<dbReference type="PhylomeDB" id="Q97ZF4"/>
<dbReference type="EvolutionaryTrace" id="Q97ZF4"/>
<dbReference type="Proteomes" id="UP000001974">
    <property type="component" value="Chromosome"/>
</dbReference>
<dbReference type="GO" id="GO:0005694">
    <property type="term" value="C:chromosome"/>
    <property type="evidence" value="ECO:0007669"/>
    <property type="project" value="UniProtKB-SubCell"/>
</dbReference>
<dbReference type="GO" id="GO:0005737">
    <property type="term" value="C:cytoplasm"/>
    <property type="evidence" value="ECO:0007669"/>
    <property type="project" value="UniProtKB-SubCell"/>
</dbReference>
<dbReference type="GO" id="GO:0003690">
    <property type="term" value="F:double-stranded DNA binding"/>
    <property type="evidence" value="ECO:0007669"/>
    <property type="project" value="UniProtKB-UniRule"/>
</dbReference>
<dbReference type="GO" id="GO:0003723">
    <property type="term" value="F:RNA binding"/>
    <property type="evidence" value="ECO:0007669"/>
    <property type="project" value="UniProtKB-KW"/>
</dbReference>
<dbReference type="GO" id="GO:0030261">
    <property type="term" value="P:chromosome condensation"/>
    <property type="evidence" value="ECO:0007669"/>
    <property type="project" value="UniProtKB-KW"/>
</dbReference>
<dbReference type="Gene3D" id="3.30.110.20">
    <property type="entry name" value="Alba-like domain"/>
    <property type="match status" value="1"/>
</dbReference>
<dbReference type="HAMAP" id="MF_01122">
    <property type="entry name" value="AlbA"/>
    <property type="match status" value="1"/>
</dbReference>
<dbReference type="InterPro" id="IPR036882">
    <property type="entry name" value="Alba-like_dom_sf"/>
</dbReference>
<dbReference type="InterPro" id="IPR013795">
    <property type="entry name" value="DNA/RNA-bd_Alba"/>
</dbReference>
<dbReference type="InterPro" id="IPR002775">
    <property type="entry name" value="DNA/RNA-bd_Alba-like"/>
</dbReference>
<dbReference type="Pfam" id="PF01918">
    <property type="entry name" value="Alba"/>
    <property type="match status" value="1"/>
</dbReference>
<dbReference type="PIRSF" id="PIRSF028732">
    <property type="entry name" value="Alba"/>
    <property type="match status" value="1"/>
</dbReference>
<dbReference type="SUPFAM" id="SSF82704">
    <property type="entry name" value="AlbA-like"/>
    <property type="match status" value="1"/>
</dbReference>
<comment type="function">
    <text evidence="3 4 5 6 7">Binds single-stranded DNA, RNA and double-stranded DNA (PubMed:12837780, PubMed:16245938). Involved in DNA compaction (PubMed:16004869, PubMed:23271660, PubMed:35454068).</text>
</comment>
<comment type="subunit">
    <text evidence="4 5 6 7">Forms homodimers and homotetramers (PubMed:16245938). Homodimer at pH below 6.0 (PubMed:16245938). Forms homotetramers and higher order homooligomers at near the growth temperature of 80 degrees Celsius and pH 7.0 (PubMed:16245938). Interacts with Alba 1; heterodimers lack cooperative DNA-binding behavior and result in more compact chromatin structures compared to Alba 1 homodimers (PubMed:16004869, PubMed:23271660, PubMed:35454068).</text>
</comment>
<comment type="interaction">
    <interactant intactId="EBI-9021196">
        <id>Q97ZF4</id>
    </interactant>
    <interactant intactId="EBI-9021190">
        <id>P60849</id>
        <label>albA1</label>
    </interactant>
    <organismsDiffer>false</organismsDiffer>
    <experiments>6</experiments>
</comment>
<comment type="subcellular location">
    <subcellularLocation>
        <location evidence="1 2">Cytoplasm</location>
    </subcellularLocation>
    <subcellularLocation>
        <location evidence="1 2">Chromosome</location>
    </subcellularLocation>
</comment>
<comment type="PTM">
    <text evidence="2">Acetylated. Acetylation at Lys-12 decreases DNA-binding affinity.</text>
</comment>
<comment type="similarity">
    <text evidence="2 10">Belongs to the histone-like Alba family.</text>
</comment>
<feature type="chain" id="PRO_0000151713" description="DNA/RNA-binding protein Alba 2">
    <location>
        <begin position="1"/>
        <end position="89"/>
    </location>
</feature>
<feature type="binding site" evidence="3 11">
    <location>
        <position position="14"/>
    </location>
    <ligand>
        <name>Zn(2+)</name>
        <dbReference type="ChEBI" id="CHEBI:29105"/>
    </ligand>
</feature>
<feature type="binding site" evidence="3 11">
    <location>
        <position position="18"/>
    </location>
    <ligand>
        <name>Zn(2+)</name>
        <dbReference type="ChEBI" id="CHEBI:29105"/>
    </ligand>
</feature>
<feature type="binding site" evidence="3 11">
    <location>
        <position position="22"/>
    </location>
    <ligand>
        <name>Zn(2+)</name>
        <dbReference type="ChEBI" id="CHEBI:29105"/>
    </ligand>
</feature>
<feature type="modified residue" description="N6-acetyllysine" evidence="2">
    <location>
        <position position="12"/>
    </location>
</feature>
<feature type="strand" evidence="15">
    <location>
        <begin position="6"/>
        <end position="9"/>
    </location>
</feature>
<feature type="strand" evidence="14">
    <location>
        <begin position="12"/>
        <end position="14"/>
    </location>
</feature>
<feature type="helix" evidence="15">
    <location>
        <begin position="16"/>
        <end position="28"/>
    </location>
</feature>
<feature type="strand" evidence="15">
    <location>
        <begin position="33"/>
        <end position="39"/>
    </location>
</feature>
<feature type="helix" evidence="15">
    <location>
        <begin position="42"/>
        <end position="57"/>
    </location>
</feature>
<feature type="helix" evidence="15">
    <location>
        <begin position="58"/>
        <end position="60"/>
    </location>
</feature>
<feature type="strand" evidence="15">
    <location>
        <begin position="61"/>
        <end position="73"/>
    </location>
</feature>
<feature type="strand" evidence="15">
    <location>
        <begin position="76"/>
        <end position="87"/>
    </location>
</feature>
<proteinExistence type="evidence at protein level"/>
<keyword id="KW-0002">3D-structure</keyword>
<keyword id="KW-0007">Acetylation</keyword>
<keyword id="KW-0158">Chromosome</keyword>
<keyword id="KW-0963">Cytoplasm</keyword>
<keyword id="KW-0226">DNA condensation</keyword>
<keyword id="KW-0238">DNA-binding</keyword>
<keyword id="KW-1185">Reference proteome</keyword>
<keyword id="KW-0694">RNA-binding</keyword>
<keyword id="KW-0862">Zinc</keyword>
<gene>
    <name evidence="2" type="primary">albA2</name>
    <name evidence="8 9" type="synonym">sso10b2</name>
    <name type="ordered locus">SSO6877</name>
</gene>
<organism>
    <name type="scientific">Saccharolobus solfataricus (strain ATCC 35092 / DSM 1617 / JCM 11322 / P2)</name>
    <name type="common">Sulfolobus solfataricus</name>
    <dbReference type="NCBI Taxonomy" id="273057"/>
    <lineage>
        <taxon>Archaea</taxon>
        <taxon>Thermoproteota</taxon>
        <taxon>Thermoprotei</taxon>
        <taxon>Sulfolobales</taxon>
        <taxon>Sulfolobaceae</taxon>
        <taxon>Saccharolobus</taxon>
    </lineage>
</organism>
<accession>Q97ZF4</accession>
<name>ALBA2_SACS2</name>
<reference key="1">
    <citation type="journal article" date="2001" name="Proc. Natl. Acad. Sci. U.S.A.">
        <title>The complete genome of the crenarchaeon Sulfolobus solfataricus P2.</title>
        <authorList>
            <person name="She Q."/>
            <person name="Singh R.K."/>
            <person name="Confalonieri F."/>
            <person name="Zivanovic Y."/>
            <person name="Allard G."/>
            <person name="Awayez M.J."/>
            <person name="Chan-Weiher C.C.-Y."/>
            <person name="Clausen I.G."/>
            <person name="Curtis B.A."/>
            <person name="De Moors A."/>
            <person name="Erauso G."/>
            <person name="Fletcher C."/>
            <person name="Gordon P.M.K."/>
            <person name="Heikamp-de Jong I."/>
            <person name="Jeffries A.C."/>
            <person name="Kozera C.J."/>
            <person name="Medina N."/>
            <person name="Peng X."/>
            <person name="Thi-Ngoc H.P."/>
            <person name="Redder P."/>
            <person name="Schenk M.E."/>
            <person name="Theriault C."/>
            <person name="Tolstrup N."/>
            <person name="Charlebois R.L."/>
            <person name="Doolittle W.F."/>
            <person name="Duguet M."/>
            <person name="Gaasterland T."/>
            <person name="Garrett R.A."/>
            <person name="Ragan M.A."/>
            <person name="Sensen C.W."/>
            <person name="Van der Oost J."/>
        </authorList>
    </citation>
    <scope>NUCLEOTIDE SEQUENCE [LARGE SCALE GENOMIC DNA]</scope>
    <source>
        <strain>ATCC 35092 / DSM 1617 / JCM 11322 / P2</strain>
    </source>
</reference>
<reference evidence="10" key="2">
    <citation type="journal article" date="2012" name="Nat. Commun.">
        <title>Alba shapes the archaeal genome using a delicate balance of bridging and stiffening the DNA.</title>
        <authorList>
            <person name="Laurens N."/>
            <person name="Driessen R.P."/>
            <person name="Heller I."/>
            <person name="Vorselen D."/>
            <person name="Noom M.C."/>
            <person name="Hol F.J."/>
            <person name="White M.F."/>
            <person name="Dame R.T."/>
            <person name="Wuite G.J."/>
        </authorList>
    </citation>
    <scope>FUNCTION</scope>
    <scope>INTERACTION WITH ALBA1</scope>
</reference>
<reference evidence="10" key="3">
    <citation type="journal article" date="2022" name="Biomolecules">
        <title>Interplay between Alba and Cren7 Regulates Chromatin Compaction in Sulfolobus solfataricus.</title>
        <authorList>
            <person name="Cajili M.K.M."/>
            <person name="Prieto E.I."/>
        </authorList>
    </citation>
    <scope>FUNCTION</scope>
    <scope>INTERACTION WITH ALBA1</scope>
</reference>
<reference evidence="11" key="4">
    <citation type="journal article" date="2003" name="J. Bacteriol.">
        <title>Crystal structure of the hyperthermophilic archaeal DNA-binding protein Sso10b2 at a resolution of 1.85 Angstroms.</title>
        <authorList>
            <person name="Chou C.C."/>
            <person name="Lin T.W."/>
            <person name="Chen C.Y."/>
            <person name="Wang A.H."/>
        </authorList>
    </citation>
    <scope>X-RAY CRYSTALLOGRAPHY (1.85 ANGSTROMS) IN COMPLEX WITH ZINC ION</scope>
    <scope>FUNCTION</scope>
</reference>
<reference evidence="12" key="5">
    <citation type="journal article" date="2005" name="Biochemistry">
        <title>Solution structure, stability, and nucleic acid binding of the hyperthermophile protein Sso10b2.</title>
        <authorList>
            <person name="Biyani K."/>
            <person name="Kahsai M.A."/>
            <person name="Clark A.T."/>
            <person name="Armstrong T.L."/>
            <person name="Edmondson S.P."/>
            <person name="Shriver J.W."/>
        </authorList>
    </citation>
    <scope>STRUCTURE BY NMR</scope>
    <scope>FUNCTION</scope>
    <scope>SUBUNIT</scope>
</reference>
<reference evidence="13" key="6">
    <citation type="journal article" date="2005" name="Structure">
        <title>Obligate heterodimerization of the archaeal Alba2 protein with Alba1 provides a mechanism for control of DNA packaging.</title>
        <authorList>
            <person name="Jelinska C."/>
            <person name="Conroy M.J."/>
            <person name="Craven C.J."/>
            <person name="Hounslow A.M."/>
            <person name="Bullough P.A."/>
            <person name="Waltho J.P."/>
            <person name="Taylor G.L."/>
            <person name="White M.F."/>
        </authorList>
    </citation>
    <scope>X-RAY CRYSTALLOGRAPHY (1.7 ANGSTROMS)</scope>
    <scope>FUNCTION</scope>
    <scope>INTERACTION WITH ALBA1</scope>
</reference>